<sequence>MSKPFKLNSAFKPSGDQPEAIRRLEEGLEDGLAHQTLLGVTGSGKTFTIANVIADLQRPTMVLAPNKTLAAQLYGEMKEFFPENAVEYFVSYYDYYQPEAYVPSSDTFIEKDASVNEHIEQMRLSATKAMLERRDVIVVASVSAIYGLGDPDLYLKMMLHLTVGMIIDQRAILRRLAELQYARNDQAFQRGTFRVRGEVIDIFPAESDDIALRVELFDEEVERLSLFDPLTGQIVSTIPRFTIYPKTHYVTPRERIVQAMEEIKEELAARRKVLLENNKLLEEQRLTQRTQFDLEMMDELGYCSGIENYSRFLSGRGPGEPPPTLFDYLPADGLLVVDESHVTIPQIGGMYRGDRARKETLVEYGFRLPSALDNRPLKFEEFEALAPQTIYVSATPGNYELEKSGGDVVDQVVRPTGLLDPIIEVRPVATQVDDLLSEIRQRAAINERVLVTTLTKRMAEDLTEYLEEHGERVRYLHSDIDTVERMEIIRDLRLGEFDVLVGINLLREGLDMPEVSLVAILDADKEGFLRSERSLIQTIGRAARNVNGKAILYGDRSTPSMAKAIGETERRREKQQKYNEEHGITPQGLNKKVVDILALGQNIAKTKAKGRGKSRPIVEPDNVPMDMLPKALQQKIHELEGLMMQHAQNLEFEEAAQIRDQLHQLRELFIAAS</sequence>
<proteinExistence type="inferred from homology"/>
<evidence type="ECO:0000255" key="1">
    <source>
        <dbReference type="HAMAP-Rule" id="MF_00204"/>
    </source>
</evidence>
<reference key="1">
    <citation type="journal article" date="2002" name="Nucleic Acids Res.">
        <title>Genome sequence of Shigella flexneri 2a: insights into pathogenicity through comparison with genomes of Escherichia coli K12 and O157.</title>
        <authorList>
            <person name="Jin Q."/>
            <person name="Yuan Z."/>
            <person name="Xu J."/>
            <person name="Wang Y."/>
            <person name="Shen Y."/>
            <person name="Lu W."/>
            <person name="Wang J."/>
            <person name="Liu H."/>
            <person name="Yang J."/>
            <person name="Yang F."/>
            <person name="Zhang X."/>
            <person name="Zhang J."/>
            <person name="Yang G."/>
            <person name="Wu H."/>
            <person name="Qu D."/>
            <person name="Dong J."/>
            <person name="Sun L."/>
            <person name="Xue Y."/>
            <person name="Zhao A."/>
            <person name="Gao Y."/>
            <person name="Zhu J."/>
            <person name="Kan B."/>
            <person name="Ding K."/>
            <person name="Chen S."/>
            <person name="Cheng H."/>
            <person name="Yao Z."/>
            <person name="He B."/>
            <person name="Chen R."/>
            <person name="Ma D."/>
            <person name="Qiang B."/>
            <person name="Wen Y."/>
            <person name="Hou Y."/>
            <person name="Yu J."/>
        </authorList>
    </citation>
    <scope>NUCLEOTIDE SEQUENCE [LARGE SCALE GENOMIC DNA]</scope>
    <source>
        <strain>301 / Serotype 2a</strain>
    </source>
</reference>
<reference key="2">
    <citation type="journal article" date="2003" name="Infect. Immun.">
        <title>Complete genome sequence and comparative genomics of Shigella flexneri serotype 2a strain 2457T.</title>
        <authorList>
            <person name="Wei J."/>
            <person name="Goldberg M.B."/>
            <person name="Burland V."/>
            <person name="Venkatesan M.M."/>
            <person name="Deng W."/>
            <person name="Fournier G."/>
            <person name="Mayhew G.F."/>
            <person name="Plunkett G. III"/>
            <person name="Rose D.J."/>
            <person name="Darling A."/>
            <person name="Mau B."/>
            <person name="Perna N.T."/>
            <person name="Payne S.M."/>
            <person name="Runyen-Janecky L.J."/>
            <person name="Zhou S."/>
            <person name="Schwartz D.C."/>
            <person name="Blattner F.R."/>
        </authorList>
    </citation>
    <scope>NUCLEOTIDE SEQUENCE [LARGE SCALE GENOMIC DNA]</scope>
    <source>
        <strain>ATCC 700930 / 2457T / Serotype 2a</strain>
    </source>
</reference>
<gene>
    <name evidence="1" type="primary">uvrB</name>
    <name type="ordered locus">SF0729</name>
    <name type="ordered locus">S0770</name>
</gene>
<dbReference type="EMBL" id="AE005674">
    <property type="protein sequence ID" value="AAN42364.1"/>
    <property type="molecule type" value="Genomic_DNA"/>
</dbReference>
<dbReference type="EMBL" id="AE014073">
    <property type="protein sequence ID" value="AAP16241.1"/>
    <property type="molecule type" value="Genomic_DNA"/>
</dbReference>
<dbReference type="RefSeq" id="NP_706657.1">
    <property type="nucleotide sequence ID" value="NC_004337.2"/>
</dbReference>
<dbReference type="RefSeq" id="WP_000042516.1">
    <property type="nucleotide sequence ID" value="NZ_WPGW01000030.1"/>
</dbReference>
<dbReference type="SMR" id="Q83S42"/>
<dbReference type="STRING" id="198214.SF0729"/>
<dbReference type="PaxDb" id="198214-SF0729"/>
<dbReference type="GeneID" id="1026139"/>
<dbReference type="KEGG" id="sfl:SF0729"/>
<dbReference type="KEGG" id="sfx:S0770"/>
<dbReference type="PATRIC" id="fig|198214.7.peg.849"/>
<dbReference type="HOGENOM" id="CLU_009621_2_1_6"/>
<dbReference type="Proteomes" id="UP000001006">
    <property type="component" value="Chromosome"/>
</dbReference>
<dbReference type="Proteomes" id="UP000002673">
    <property type="component" value="Chromosome"/>
</dbReference>
<dbReference type="GO" id="GO:0005737">
    <property type="term" value="C:cytoplasm"/>
    <property type="evidence" value="ECO:0007669"/>
    <property type="project" value="UniProtKB-SubCell"/>
</dbReference>
<dbReference type="GO" id="GO:0009380">
    <property type="term" value="C:excinuclease repair complex"/>
    <property type="evidence" value="ECO:0007669"/>
    <property type="project" value="InterPro"/>
</dbReference>
<dbReference type="GO" id="GO:0005524">
    <property type="term" value="F:ATP binding"/>
    <property type="evidence" value="ECO:0007669"/>
    <property type="project" value="UniProtKB-UniRule"/>
</dbReference>
<dbReference type="GO" id="GO:0016887">
    <property type="term" value="F:ATP hydrolysis activity"/>
    <property type="evidence" value="ECO:0007669"/>
    <property type="project" value="InterPro"/>
</dbReference>
<dbReference type="GO" id="GO:0003677">
    <property type="term" value="F:DNA binding"/>
    <property type="evidence" value="ECO:0007669"/>
    <property type="project" value="UniProtKB-UniRule"/>
</dbReference>
<dbReference type="GO" id="GO:0009381">
    <property type="term" value="F:excinuclease ABC activity"/>
    <property type="evidence" value="ECO:0007669"/>
    <property type="project" value="UniProtKB-UniRule"/>
</dbReference>
<dbReference type="GO" id="GO:0006289">
    <property type="term" value="P:nucleotide-excision repair"/>
    <property type="evidence" value="ECO:0007669"/>
    <property type="project" value="UniProtKB-UniRule"/>
</dbReference>
<dbReference type="GO" id="GO:0009432">
    <property type="term" value="P:SOS response"/>
    <property type="evidence" value="ECO:0007669"/>
    <property type="project" value="UniProtKB-UniRule"/>
</dbReference>
<dbReference type="CDD" id="cd17916">
    <property type="entry name" value="DEXHc_UvrB"/>
    <property type="match status" value="1"/>
</dbReference>
<dbReference type="CDD" id="cd18790">
    <property type="entry name" value="SF2_C_UvrB"/>
    <property type="match status" value="1"/>
</dbReference>
<dbReference type="FunFam" id="3.40.50.300:FF:000257">
    <property type="entry name" value="UvrABC system protein B"/>
    <property type="match status" value="1"/>
</dbReference>
<dbReference type="FunFam" id="3.40.50.300:FF:000401">
    <property type="entry name" value="UvrABC system protein B"/>
    <property type="match status" value="1"/>
</dbReference>
<dbReference type="FunFam" id="3.40.50.300:FF:000477">
    <property type="entry name" value="UvrABC system protein B"/>
    <property type="match status" value="1"/>
</dbReference>
<dbReference type="Gene3D" id="3.40.50.300">
    <property type="entry name" value="P-loop containing nucleotide triphosphate hydrolases"/>
    <property type="match status" value="3"/>
</dbReference>
<dbReference type="Gene3D" id="4.10.860.10">
    <property type="entry name" value="UVR domain"/>
    <property type="match status" value="1"/>
</dbReference>
<dbReference type="HAMAP" id="MF_00204">
    <property type="entry name" value="UvrB"/>
    <property type="match status" value="1"/>
</dbReference>
<dbReference type="InterPro" id="IPR006935">
    <property type="entry name" value="Helicase/UvrB_N"/>
</dbReference>
<dbReference type="InterPro" id="IPR014001">
    <property type="entry name" value="Helicase_ATP-bd"/>
</dbReference>
<dbReference type="InterPro" id="IPR001650">
    <property type="entry name" value="Helicase_C-like"/>
</dbReference>
<dbReference type="InterPro" id="IPR027417">
    <property type="entry name" value="P-loop_NTPase"/>
</dbReference>
<dbReference type="InterPro" id="IPR001943">
    <property type="entry name" value="UVR_dom"/>
</dbReference>
<dbReference type="InterPro" id="IPR036876">
    <property type="entry name" value="UVR_dom_sf"/>
</dbReference>
<dbReference type="InterPro" id="IPR004807">
    <property type="entry name" value="UvrB"/>
</dbReference>
<dbReference type="InterPro" id="IPR041471">
    <property type="entry name" value="UvrB_inter"/>
</dbReference>
<dbReference type="InterPro" id="IPR024759">
    <property type="entry name" value="UvrB_YAD/RRR_dom"/>
</dbReference>
<dbReference type="NCBIfam" id="NF003673">
    <property type="entry name" value="PRK05298.1"/>
    <property type="match status" value="1"/>
</dbReference>
<dbReference type="NCBIfam" id="TIGR00631">
    <property type="entry name" value="uvrb"/>
    <property type="match status" value="1"/>
</dbReference>
<dbReference type="PANTHER" id="PTHR24029">
    <property type="entry name" value="UVRABC SYSTEM PROTEIN B"/>
    <property type="match status" value="1"/>
</dbReference>
<dbReference type="PANTHER" id="PTHR24029:SF0">
    <property type="entry name" value="UVRABC SYSTEM PROTEIN B"/>
    <property type="match status" value="1"/>
</dbReference>
<dbReference type="Pfam" id="PF00271">
    <property type="entry name" value="Helicase_C"/>
    <property type="match status" value="1"/>
</dbReference>
<dbReference type="Pfam" id="PF04851">
    <property type="entry name" value="ResIII"/>
    <property type="match status" value="1"/>
</dbReference>
<dbReference type="Pfam" id="PF02151">
    <property type="entry name" value="UVR"/>
    <property type="match status" value="1"/>
</dbReference>
<dbReference type="Pfam" id="PF12344">
    <property type="entry name" value="UvrB"/>
    <property type="match status" value="1"/>
</dbReference>
<dbReference type="Pfam" id="PF17757">
    <property type="entry name" value="UvrB_inter"/>
    <property type="match status" value="1"/>
</dbReference>
<dbReference type="SMART" id="SM00487">
    <property type="entry name" value="DEXDc"/>
    <property type="match status" value="1"/>
</dbReference>
<dbReference type="SMART" id="SM00490">
    <property type="entry name" value="HELICc"/>
    <property type="match status" value="1"/>
</dbReference>
<dbReference type="SUPFAM" id="SSF46600">
    <property type="entry name" value="C-terminal UvrC-binding domain of UvrB"/>
    <property type="match status" value="1"/>
</dbReference>
<dbReference type="SUPFAM" id="SSF52540">
    <property type="entry name" value="P-loop containing nucleoside triphosphate hydrolases"/>
    <property type="match status" value="2"/>
</dbReference>
<dbReference type="PROSITE" id="PS51192">
    <property type="entry name" value="HELICASE_ATP_BIND_1"/>
    <property type="match status" value="1"/>
</dbReference>
<dbReference type="PROSITE" id="PS51194">
    <property type="entry name" value="HELICASE_CTER"/>
    <property type="match status" value="1"/>
</dbReference>
<dbReference type="PROSITE" id="PS50151">
    <property type="entry name" value="UVR"/>
    <property type="match status" value="1"/>
</dbReference>
<name>UVRB_SHIFL</name>
<organism>
    <name type="scientific">Shigella flexneri</name>
    <dbReference type="NCBI Taxonomy" id="623"/>
    <lineage>
        <taxon>Bacteria</taxon>
        <taxon>Pseudomonadati</taxon>
        <taxon>Pseudomonadota</taxon>
        <taxon>Gammaproteobacteria</taxon>
        <taxon>Enterobacterales</taxon>
        <taxon>Enterobacteriaceae</taxon>
        <taxon>Shigella</taxon>
    </lineage>
</organism>
<keyword id="KW-0067">ATP-binding</keyword>
<keyword id="KW-0963">Cytoplasm</keyword>
<keyword id="KW-0227">DNA damage</keyword>
<keyword id="KW-0228">DNA excision</keyword>
<keyword id="KW-0234">DNA repair</keyword>
<keyword id="KW-0267">Excision nuclease</keyword>
<keyword id="KW-0547">Nucleotide-binding</keyword>
<keyword id="KW-1185">Reference proteome</keyword>
<keyword id="KW-0742">SOS response</keyword>
<feature type="chain" id="PRO_0000227361" description="UvrABC system protein B">
    <location>
        <begin position="1"/>
        <end position="673"/>
    </location>
</feature>
<feature type="domain" description="Helicase ATP-binding" evidence="1">
    <location>
        <begin position="26"/>
        <end position="414"/>
    </location>
</feature>
<feature type="domain" description="Helicase C-terminal" evidence="1">
    <location>
        <begin position="431"/>
        <end position="597"/>
    </location>
</feature>
<feature type="domain" description="UVR" evidence="1">
    <location>
        <begin position="633"/>
        <end position="668"/>
    </location>
</feature>
<feature type="short sequence motif" description="Beta-hairpin">
    <location>
        <begin position="92"/>
        <end position="115"/>
    </location>
</feature>
<feature type="binding site" evidence="1">
    <location>
        <begin position="39"/>
        <end position="46"/>
    </location>
    <ligand>
        <name>ATP</name>
        <dbReference type="ChEBI" id="CHEBI:30616"/>
    </ligand>
</feature>
<protein>
    <recommendedName>
        <fullName evidence="1">UvrABC system protein B</fullName>
        <shortName evidence="1">Protein UvrB</shortName>
    </recommendedName>
    <alternativeName>
        <fullName evidence="1">Excinuclease ABC subunit B</fullName>
    </alternativeName>
</protein>
<accession>Q83S42</accession>
<accession>Q7C2H2</accession>
<comment type="function">
    <text evidence="1">The UvrABC repair system catalyzes the recognition and processing of DNA lesions. A damage recognition complex composed of 2 UvrA and 2 UvrB subunits scans DNA for abnormalities. Upon binding of the UvrA(2)B(2) complex to a putative damaged site, the DNA wraps around one UvrB monomer. DNA wrap is dependent on ATP binding by UvrB and probably causes local melting of the DNA helix, facilitating insertion of UvrB beta-hairpin between the DNA strands. Then UvrB probes one DNA strand for the presence of a lesion. If a lesion is found the UvrA subunits dissociate and the UvrB-DNA preincision complex is formed. This complex is subsequently bound by UvrC and the second UvrB is released. If no lesion is found, the DNA wraps around the other UvrB subunit that will check the other stand for damage.</text>
</comment>
<comment type="subunit">
    <text evidence="1">Forms a heterotetramer with UvrA during the search for lesions. Interacts with UvrC in an incision complex.</text>
</comment>
<comment type="subcellular location">
    <subcellularLocation>
        <location evidence="1">Cytoplasm</location>
    </subcellularLocation>
</comment>
<comment type="domain">
    <text evidence="1">The beta-hairpin motif is involved in DNA binding.</text>
</comment>
<comment type="similarity">
    <text evidence="1">Belongs to the UvrB family.</text>
</comment>